<proteinExistence type="inferred from homology"/>
<organism>
    <name type="scientific">Actinobacillus pleuropneumoniae serotype 5b (strain L20)</name>
    <dbReference type="NCBI Taxonomy" id="416269"/>
    <lineage>
        <taxon>Bacteria</taxon>
        <taxon>Pseudomonadati</taxon>
        <taxon>Pseudomonadota</taxon>
        <taxon>Gammaproteobacteria</taxon>
        <taxon>Pasteurellales</taxon>
        <taxon>Pasteurellaceae</taxon>
        <taxon>Actinobacillus</taxon>
    </lineage>
</organism>
<name>AROC_ACTP2</name>
<evidence type="ECO:0000255" key="1">
    <source>
        <dbReference type="HAMAP-Rule" id="MF_00300"/>
    </source>
</evidence>
<accession>A3N0B0</accession>
<feature type="chain" id="PRO_1000022456" description="Chorismate synthase">
    <location>
        <begin position="1"/>
        <end position="360"/>
    </location>
</feature>
<feature type="binding site" evidence="1">
    <location>
        <position position="48"/>
    </location>
    <ligand>
        <name>NADP(+)</name>
        <dbReference type="ChEBI" id="CHEBI:58349"/>
    </ligand>
</feature>
<feature type="binding site" evidence="1">
    <location>
        <position position="54"/>
    </location>
    <ligand>
        <name>NADP(+)</name>
        <dbReference type="ChEBI" id="CHEBI:58349"/>
    </ligand>
</feature>
<feature type="binding site" evidence="1">
    <location>
        <begin position="125"/>
        <end position="127"/>
    </location>
    <ligand>
        <name>FMN</name>
        <dbReference type="ChEBI" id="CHEBI:58210"/>
    </ligand>
</feature>
<feature type="binding site" evidence="1">
    <location>
        <begin position="246"/>
        <end position="247"/>
    </location>
    <ligand>
        <name>FMN</name>
        <dbReference type="ChEBI" id="CHEBI:58210"/>
    </ligand>
</feature>
<feature type="binding site" evidence="1">
    <location>
        <position position="286"/>
    </location>
    <ligand>
        <name>FMN</name>
        <dbReference type="ChEBI" id="CHEBI:58210"/>
    </ligand>
</feature>
<feature type="binding site" evidence="1">
    <location>
        <begin position="301"/>
        <end position="305"/>
    </location>
    <ligand>
        <name>FMN</name>
        <dbReference type="ChEBI" id="CHEBI:58210"/>
    </ligand>
</feature>
<feature type="binding site" evidence="1">
    <location>
        <position position="327"/>
    </location>
    <ligand>
        <name>FMN</name>
        <dbReference type="ChEBI" id="CHEBI:58210"/>
    </ligand>
</feature>
<reference key="1">
    <citation type="journal article" date="2008" name="J. Bacteriol.">
        <title>The complete genome sequence of Actinobacillus pleuropneumoniae L20 (serotype 5b).</title>
        <authorList>
            <person name="Foote S.J."/>
            <person name="Bosse J.T."/>
            <person name="Bouevitch A.B."/>
            <person name="Langford P.R."/>
            <person name="Young N.M."/>
            <person name="Nash J.H.E."/>
        </authorList>
    </citation>
    <scope>NUCLEOTIDE SEQUENCE [LARGE SCALE GENOMIC DNA]</scope>
    <source>
        <strain>L20</strain>
    </source>
</reference>
<sequence>MAGNSIGQLFKVTTFGESHGIALGCIVDGVPPNMALSEADIQPDLDRRKPGTSRYTTPRREDDEVQILSGVFEGKTTGTSIGLIIKNADQRSKDYGDIADKFRPGHADYTYQQKYGIRDYRGGGRSSARETAMRVAAGAIAKKYLREQFGIEVRGYLSQIGNVKINPETVADISKIDWQQVASNPFFCPDPVAVEGFGELIRELKKDGDSIGAKLTVVAENVPVGLGEPVFDRLDADLAHALMSINAVKAVEIGDGFDVVEQRGSEHRDEMTPQGFVSNHAGGILGGISSGQPIIAHIALKPTSSIMVPGRSVNLNNEQVELITKGRHDPCVGIRAVPIAEAMTAIILLDHLLRFKAQCR</sequence>
<comment type="function">
    <text evidence="1">Catalyzes the anti-1,4-elimination of the C-3 phosphate and the C-6 proR hydrogen from 5-enolpyruvylshikimate-3-phosphate (EPSP) to yield chorismate, which is the branch point compound that serves as the starting substrate for the three terminal pathways of aromatic amino acid biosynthesis. This reaction introduces a second double bond into the aromatic ring system.</text>
</comment>
<comment type="catalytic activity">
    <reaction evidence="1">
        <text>5-O-(1-carboxyvinyl)-3-phosphoshikimate = chorismate + phosphate</text>
        <dbReference type="Rhea" id="RHEA:21020"/>
        <dbReference type="ChEBI" id="CHEBI:29748"/>
        <dbReference type="ChEBI" id="CHEBI:43474"/>
        <dbReference type="ChEBI" id="CHEBI:57701"/>
        <dbReference type="EC" id="4.2.3.5"/>
    </reaction>
</comment>
<comment type="cofactor">
    <cofactor evidence="1">
        <name>FMNH2</name>
        <dbReference type="ChEBI" id="CHEBI:57618"/>
    </cofactor>
    <text evidence="1">Reduced FMN (FMNH(2)).</text>
</comment>
<comment type="pathway">
    <text evidence="1">Metabolic intermediate biosynthesis; chorismate biosynthesis; chorismate from D-erythrose 4-phosphate and phosphoenolpyruvate: step 7/7.</text>
</comment>
<comment type="subunit">
    <text evidence="1">Homotetramer.</text>
</comment>
<comment type="similarity">
    <text evidence="1">Belongs to the chorismate synthase family.</text>
</comment>
<dbReference type="EC" id="4.2.3.5" evidence="1"/>
<dbReference type="EMBL" id="CP000569">
    <property type="protein sequence ID" value="ABN73846.1"/>
    <property type="molecule type" value="Genomic_DNA"/>
</dbReference>
<dbReference type="RefSeq" id="WP_009875556.1">
    <property type="nucleotide sequence ID" value="NC_009053.1"/>
</dbReference>
<dbReference type="SMR" id="A3N0B0"/>
<dbReference type="STRING" id="416269.APL_0748"/>
<dbReference type="EnsemblBacteria" id="ABN73846">
    <property type="protein sequence ID" value="ABN73846"/>
    <property type="gene ID" value="APL_0748"/>
</dbReference>
<dbReference type="KEGG" id="apl:APL_0748"/>
<dbReference type="PATRIC" id="fig|416269.6.peg.783"/>
<dbReference type="eggNOG" id="COG0082">
    <property type="taxonomic scope" value="Bacteria"/>
</dbReference>
<dbReference type="HOGENOM" id="CLU_034547_0_2_6"/>
<dbReference type="UniPathway" id="UPA00053">
    <property type="reaction ID" value="UER00090"/>
</dbReference>
<dbReference type="Proteomes" id="UP000001432">
    <property type="component" value="Chromosome"/>
</dbReference>
<dbReference type="GO" id="GO:0005829">
    <property type="term" value="C:cytosol"/>
    <property type="evidence" value="ECO:0007669"/>
    <property type="project" value="TreeGrafter"/>
</dbReference>
<dbReference type="GO" id="GO:0004107">
    <property type="term" value="F:chorismate synthase activity"/>
    <property type="evidence" value="ECO:0007669"/>
    <property type="project" value="UniProtKB-UniRule"/>
</dbReference>
<dbReference type="GO" id="GO:0010181">
    <property type="term" value="F:FMN binding"/>
    <property type="evidence" value="ECO:0007669"/>
    <property type="project" value="TreeGrafter"/>
</dbReference>
<dbReference type="GO" id="GO:0008652">
    <property type="term" value="P:amino acid biosynthetic process"/>
    <property type="evidence" value="ECO:0007669"/>
    <property type="project" value="UniProtKB-KW"/>
</dbReference>
<dbReference type="GO" id="GO:0009073">
    <property type="term" value="P:aromatic amino acid family biosynthetic process"/>
    <property type="evidence" value="ECO:0007669"/>
    <property type="project" value="UniProtKB-KW"/>
</dbReference>
<dbReference type="GO" id="GO:0009423">
    <property type="term" value="P:chorismate biosynthetic process"/>
    <property type="evidence" value="ECO:0007669"/>
    <property type="project" value="UniProtKB-UniRule"/>
</dbReference>
<dbReference type="CDD" id="cd07304">
    <property type="entry name" value="Chorismate_synthase"/>
    <property type="match status" value="1"/>
</dbReference>
<dbReference type="FunFam" id="3.60.150.10:FF:000001">
    <property type="entry name" value="Chorismate synthase"/>
    <property type="match status" value="1"/>
</dbReference>
<dbReference type="Gene3D" id="3.60.150.10">
    <property type="entry name" value="Chorismate synthase AroC"/>
    <property type="match status" value="1"/>
</dbReference>
<dbReference type="HAMAP" id="MF_00300">
    <property type="entry name" value="Chorismate_synth"/>
    <property type="match status" value="1"/>
</dbReference>
<dbReference type="InterPro" id="IPR000453">
    <property type="entry name" value="Chorismate_synth"/>
</dbReference>
<dbReference type="InterPro" id="IPR035904">
    <property type="entry name" value="Chorismate_synth_AroC_sf"/>
</dbReference>
<dbReference type="InterPro" id="IPR020541">
    <property type="entry name" value="Chorismate_synthase_CS"/>
</dbReference>
<dbReference type="NCBIfam" id="TIGR00033">
    <property type="entry name" value="aroC"/>
    <property type="match status" value="1"/>
</dbReference>
<dbReference type="NCBIfam" id="NF003793">
    <property type="entry name" value="PRK05382.1"/>
    <property type="match status" value="1"/>
</dbReference>
<dbReference type="PANTHER" id="PTHR21085">
    <property type="entry name" value="CHORISMATE SYNTHASE"/>
    <property type="match status" value="1"/>
</dbReference>
<dbReference type="PANTHER" id="PTHR21085:SF0">
    <property type="entry name" value="CHORISMATE SYNTHASE"/>
    <property type="match status" value="1"/>
</dbReference>
<dbReference type="Pfam" id="PF01264">
    <property type="entry name" value="Chorismate_synt"/>
    <property type="match status" value="1"/>
</dbReference>
<dbReference type="PIRSF" id="PIRSF001456">
    <property type="entry name" value="Chorismate_synth"/>
    <property type="match status" value="1"/>
</dbReference>
<dbReference type="SUPFAM" id="SSF103263">
    <property type="entry name" value="Chorismate synthase, AroC"/>
    <property type="match status" value="1"/>
</dbReference>
<dbReference type="PROSITE" id="PS00787">
    <property type="entry name" value="CHORISMATE_SYNTHASE_1"/>
    <property type="match status" value="1"/>
</dbReference>
<dbReference type="PROSITE" id="PS00788">
    <property type="entry name" value="CHORISMATE_SYNTHASE_2"/>
    <property type="match status" value="1"/>
</dbReference>
<dbReference type="PROSITE" id="PS00789">
    <property type="entry name" value="CHORISMATE_SYNTHASE_3"/>
    <property type="match status" value="1"/>
</dbReference>
<gene>
    <name evidence="1" type="primary">aroC</name>
    <name type="ordered locus">APL_0748</name>
</gene>
<protein>
    <recommendedName>
        <fullName evidence="1">Chorismate synthase</fullName>
        <shortName evidence="1">CS</shortName>
        <ecNumber evidence="1">4.2.3.5</ecNumber>
    </recommendedName>
    <alternativeName>
        <fullName evidence="1">5-enolpyruvylshikimate-3-phosphate phospholyase</fullName>
    </alternativeName>
</protein>
<keyword id="KW-0028">Amino-acid biosynthesis</keyword>
<keyword id="KW-0057">Aromatic amino acid biosynthesis</keyword>
<keyword id="KW-0274">FAD</keyword>
<keyword id="KW-0285">Flavoprotein</keyword>
<keyword id="KW-0288">FMN</keyword>
<keyword id="KW-0456">Lyase</keyword>
<keyword id="KW-0521">NADP</keyword>
<keyword id="KW-1185">Reference proteome</keyword>